<comment type="function">
    <text evidence="1">Tetrapolymerization of the monopyrrole PBG into the hydroxymethylbilane pre-uroporphyrinogen in several discrete steps.</text>
</comment>
<comment type="catalytic activity">
    <reaction>
        <text>4 porphobilinogen + H2O = hydroxymethylbilane + 4 NH4(+)</text>
        <dbReference type="Rhea" id="RHEA:13185"/>
        <dbReference type="ChEBI" id="CHEBI:15377"/>
        <dbReference type="ChEBI" id="CHEBI:28938"/>
        <dbReference type="ChEBI" id="CHEBI:57845"/>
        <dbReference type="ChEBI" id="CHEBI:58126"/>
        <dbReference type="EC" id="2.5.1.61"/>
    </reaction>
</comment>
<comment type="cofactor">
    <cofactor evidence="1">
        <name>dipyrromethane</name>
        <dbReference type="ChEBI" id="CHEBI:60342"/>
    </cofactor>
    <text evidence="1">Binds 1 dipyrromethane group covalently.</text>
</comment>
<comment type="pathway">
    <text>Porphyrin-containing compound metabolism; protoporphyrin-IX biosynthesis; coproporphyrinogen-III from 5-aminolevulinate: step 2/4.</text>
</comment>
<comment type="subunit">
    <text evidence="1">Monomer.</text>
</comment>
<comment type="miscellaneous">
    <text evidence="1">The porphobilinogen subunits are added to the dipyrromethane group.</text>
</comment>
<comment type="similarity">
    <text evidence="2">Belongs to the HMBS family.</text>
</comment>
<sequence length="305" mass="32899">MPLLRIATRKSLLAMWQSEYVAARLRMLRPDLDVVLVPMSTRGDEILDRSLAAIGGKGLFLKELELAMLRGDADCAVHSLKDVPMDLEPPFMLAAVLSRDDPADALISNVYLSLESLPIGARVATSSLRRQAQLRFYRPDLRLFDLRGNVNTRLAKLDNGDYDAIVLACAGLRRLGLEQRMTARLAPPEWLPAPGQGAIAVESLTEDARIGTLLAGLDDLPTRQCVVAERTMNRALHGSCHVPVGAYASYEVGGMRLQGLVGCVADGRLVRAELCSAKDEGDMLGRAVAQCLLDAGAAELLAATA</sequence>
<reference key="1">
    <citation type="journal article" date="2000" name="Nature">
        <title>The genome sequence of the plant pathogen Xylella fastidiosa.</title>
        <authorList>
            <person name="Simpson A.J.G."/>
            <person name="Reinach F.C."/>
            <person name="Arruda P."/>
            <person name="Abreu F.A."/>
            <person name="Acencio M."/>
            <person name="Alvarenga R."/>
            <person name="Alves L.M.C."/>
            <person name="Araya J.E."/>
            <person name="Baia G.S."/>
            <person name="Baptista C.S."/>
            <person name="Barros M.H."/>
            <person name="Bonaccorsi E.D."/>
            <person name="Bordin S."/>
            <person name="Bove J.M."/>
            <person name="Briones M.R.S."/>
            <person name="Bueno M.R.P."/>
            <person name="Camargo A.A."/>
            <person name="Camargo L.E.A."/>
            <person name="Carraro D.M."/>
            <person name="Carrer H."/>
            <person name="Colauto N.B."/>
            <person name="Colombo C."/>
            <person name="Costa F.F."/>
            <person name="Costa M.C.R."/>
            <person name="Costa-Neto C.M."/>
            <person name="Coutinho L.L."/>
            <person name="Cristofani M."/>
            <person name="Dias-Neto E."/>
            <person name="Docena C."/>
            <person name="El-Dorry H."/>
            <person name="Facincani A.P."/>
            <person name="Ferreira A.J.S."/>
            <person name="Ferreira V.C.A."/>
            <person name="Ferro J.A."/>
            <person name="Fraga J.S."/>
            <person name="Franca S.C."/>
            <person name="Franco M.C."/>
            <person name="Frohme M."/>
            <person name="Furlan L.R."/>
            <person name="Garnier M."/>
            <person name="Goldman G.H."/>
            <person name="Goldman M.H.S."/>
            <person name="Gomes S.L."/>
            <person name="Gruber A."/>
            <person name="Ho P.L."/>
            <person name="Hoheisel J.D."/>
            <person name="Junqueira M.L."/>
            <person name="Kemper E.L."/>
            <person name="Kitajima J.P."/>
            <person name="Krieger J.E."/>
            <person name="Kuramae E.E."/>
            <person name="Laigret F."/>
            <person name="Lambais M.R."/>
            <person name="Leite L.C.C."/>
            <person name="Lemos E.G.M."/>
            <person name="Lemos M.V.F."/>
            <person name="Lopes S.A."/>
            <person name="Lopes C.R."/>
            <person name="Machado J.A."/>
            <person name="Machado M.A."/>
            <person name="Madeira A.M.B.N."/>
            <person name="Madeira H.M.F."/>
            <person name="Marino C.L."/>
            <person name="Marques M.V."/>
            <person name="Martins E.A.L."/>
            <person name="Martins E.M.F."/>
            <person name="Matsukuma A.Y."/>
            <person name="Menck C.F.M."/>
            <person name="Miracca E.C."/>
            <person name="Miyaki C.Y."/>
            <person name="Monteiro-Vitorello C.B."/>
            <person name="Moon D.H."/>
            <person name="Nagai M.A."/>
            <person name="Nascimento A.L.T.O."/>
            <person name="Netto L.E.S."/>
            <person name="Nhani A. Jr."/>
            <person name="Nobrega F.G."/>
            <person name="Nunes L.R."/>
            <person name="Oliveira M.A."/>
            <person name="de Oliveira M.C."/>
            <person name="de Oliveira R.C."/>
            <person name="Palmieri D.A."/>
            <person name="Paris A."/>
            <person name="Peixoto B.R."/>
            <person name="Pereira G.A.G."/>
            <person name="Pereira H.A. Jr."/>
            <person name="Pesquero J.B."/>
            <person name="Quaggio R.B."/>
            <person name="Roberto P.G."/>
            <person name="Rodrigues V."/>
            <person name="de Rosa A.J.M."/>
            <person name="de Rosa V.E. Jr."/>
            <person name="de Sa R.G."/>
            <person name="Santelli R.V."/>
            <person name="Sawasaki H.E."/>
            <person name="da Silva A.C.R."/>
            <person name="da Silva A.M."/>
            <person name="da Silva F.R."/>
            <person name="Silva W.A. Jr."/>
            <person name="da Silveira J.F."/>
            <person name="Silvestri M.L.Z."/>
            <person name="Siqueira W.J."/>
            <person name="de Souza A.A."/>
            <person name="de Souza A.P."/>
            <person name="Terenzi M.F."/>
            <person name="Truffi D."/>
            <person name="Tsai S.M."/>
            <person name="Tsuhako M.H."/>
            <person name="Vallada H."/>
            <person name="Van Sluys M.A."/>
            <person name="Verjovski-Almeida S."/>
            <person name="Vettore A.L."/>
            <person name="Zago M.A."/>
            <person name="Zatz M."/>
            <person name="Meidanis J."/>
            <person name="Setubal J.C."/>
        </authorList>
    </citation>
    <scope>NUCLEOTIDE SEQUENCE [LARGE SCALE GENOMIC DNA]</scope>
    <source>
        <strain>9a5c</strain>
    </source>
</reference>
<accession>Q9PCX7</accession>
<keyword id="KW-0627">Porphyrin biosynthesis</keyword>
<keyword id="KW-0808">Transferase</keyword>
<evidence type="ECO:0000250" key="1"/>
<evidence type="ECO:0000305" key="2"/>
<gene>
    <name type="primary">hemC</name>
    <name type="ordered locus">XF_1627</name>
</gene>
<organism>
    <name type="scientific">Xylella fastidiosa (strain 9a5c)</name>
    <dbReference type="NCBI Taxonomy" id="160492"/>
    <lineage>
        <taxon>Bacteria</taxon>
        <taxon>Pseudomonadati</taxon>
        <taxon>Pseudomonadota</taxon>
        <taxon>Gammaproteobacteria</taxon>
        <taxon>Lysobacterales</taxon>
        <taxon>Lysobacteraceae</taxon>
        <taxon>Xylella</taxon>
    </lineage>
</organism>
<protein>
    <recommendedName>
        <fullName>Porphobilinogen deaminase</fullName>
        <shortName>PBG</shortName>
        <ecNumber>2.5.1.61</ecNumber>
    </recommendedName>
    <alternativeName>
        <fullName>Hydroxymethylbilane synthase</fullName>
        <shortName>HMBS</shortName>
    </alternativeName>
    <alternativeName>
        <fullName>Pre-uroporphyrinogen synthase</fullName>
    </alternativeName>
</protein>
<feature type="chain" id="PRO_0000143012" description="Porphobilinogen deaminase">
    <location>
        <begin position="1"/>
        <end position="305"/>
    </location>
</feature>
<feature type="modified residue" description="S-(dipyrrolylmethanemethyl)cysteine" evidence="1">
    <location>
        <position position="240"/>
    </location>
</feature>
<name>HEM3_XYLFA</name>
<dbReference type="EC" id="2.5.1.61"/>
<dbReference type="EMBL" id="AE003849">
    <property type="protein sequence ID" value="AAF84436.1"/>
    <property type="molecule type" value="Genomic_DNA"/>
</dbReference>
<dbReference type="PIR" id="C82659">
    <property type="entry name" value="C82659"/>
</dbReference>
<dbReference type="RefSeq" id="WP_010894123.1">
    <property type="nucleotide sequence ID" value="NC_002488.3"/>
</dbReference>
<dbReference type="SMR" id="Q9PCX7"/>
<dbReference type="STRING" id="160492.XF_1627"/>
<dbReference type="KEGG" id="xfa:XF_1627"/>
<dbReference type="eggNOG" id="COG0181">
    <property type="taxonomic scope" value="Bacteria"/>
</dbReference>
<dbReference type="HOGENOM" id="CLU_019704_0_2_6"/>
<dbReference type="UniPathway" id="UPA00251">
    <property type="reaction ID" value="UER00319"/>
</dbReference>
<dbReference type="Proteomes" id="UP000000812">
    <property type="component" value="Chromosome"/>
</dbReference>
<dbReference type="GO" id="GO:0005737">
    <property type="term" value="C:cytoplasm"/>
    <property type="evidence" value="ECO:0007669"/>
    <property type="project" value="TreeGrafter"/>
</dbReference>
<dbReference type="GO" id="GO:0004418">
    <property type="term" value="F:hydroxymethylbilane synthase activity"/>
    <property type="evidence" value="ECO:0007669"/>
    <property type="project" value="UniProtKB-UniRule"/>
</dbReference>
<dbReference type="GO" id="GO:0006782">
    <property type="term" value="P:protoporphyrinogen IX biosynthetic process"/>
    <property type="evidence" value="ECO:0007669"/>
    <property type="project" value="UniProtKB-UniRule"/>
</dbReference>
<dbReference type="CDD" id="cd13646">
    <property type="entry name" value="PBP2_EcHMBS_like"/>
    <property type="match status" value="1"/>
</dbReference>
<dbReference type="FunFam" id="3.40.190.10:FF:000004">
    <property type="entry name" value="Porphobilinogen deaminase"/>
    <property type="match status" value="1"/>
</dbReference>
<dbReference type="FunFam" id="3.40.190.10:FF:000005">
    <property type="entry name" value="Porphobilinogen deaminase"/>
    <property type="match status" value="1"/>
</dbReference>
<dbReference type="Gene3D" id="3.40.190.10">
    <property type="entry name" value="Periplasmic binding protein-like II"/>
    <property type="match status" value="2"/>
</dbReference>
<dbReference type="Gene3D" id="3.30.160.40">
    <property type="entry name" value="Porphobilinogen deaminase, C-terminal domain"/>
    <property type="match status" value="1"/>
</dbReference>
<dbReference type="HAMAP" id="MF_00260">
    <property type="entry name" value="Porphobil_deam"/>
    <property type="match status" value="1"/>
</dbReference>
<dbReference type="InterPro" id="IPR000860">
    <property type="entry name" value="HemC"/>
</dbReference>
<dbReference type="InterPro" id="IPR022419">
    <property type="entry name" value="Porphobilin_deaminase_cofac_BS"/>
</dbReference>
<dbReference type="InterPro" id="IPR022417">
    <property type="entry name" value="Porphobilin_deaminase_N"/>
</dbReference>
<dbReference type="InterPro" id="IPR022418">
    <property type="entry name" value="Porphobilinogen_deaminase_C"/>
</dbReference>
<dbReference type="InterPro" id="IPR036803">
    <property type="entry name" value="Porphobilinogen_deaminase_C_sf"/>
</dbReference>
<dbReference type="NCBIfam" id="TIGR00212">
    <property type="entry name" value="hemC"/>
    <property type="match status" value="1"/>
</dbReference>
<dbReference type="PANTHER" id="PTHR11557">
    <property type="entry name" value="PORPHOBILINOGEN DEAMINASE"/>
    <property type="match status" value="1"/>
</dbReference>
<dbReference type="PANTHER" id="PTHR11557:SF0">
    <property type="entry name" value="PORPHOBILINOGEN DEAMINASE"/>
    <property type="match status" value="1"/>
</dbReference>
<dbReference type="Pfam" id="PF01379">
    <property type="entry name" value="Porphobil_deam"/>
    <property type="match status" value="1"/>
</dbReference>
<dbReference type="Pfam" id="PF03900">
    <property type="entry name" value="Porphobil_deamC"/>
    <property type="match status" value="1"/>
</dbReference>
<dbReference type="PIRSF" id="PIRSF001438">
    <property type="entry name" value="4pyrrol_synth_OHMeBilane_synth"/>
    <property type="match status" value="1"/>
</dbReference>
<dbReference type="PRINTS" id="PR00151">
    <property type="entry name" value="PORPHBDMNASE"/>
</dbReference>
<dbReference type="SUPFAM" id="SSF53850">
    <property type="entry name" value="Periplasmic binding protein-like II"/>
    <property type="match status" value="1"/>
</dbReference>
<dbReference type="SUPFAM" id="SSF54782">
    <property type="entry name" value="Porphobilinogen deaminase (hydroxymethylbilane synthase), C-terminal domain"/>
    <property type="match status" value="1"/>
</dbReference>
<dbReference type="PROSITE" id="PS00533">
    <property type="entry name" value="PORPHOBILINOGEN_DEAM"/>
    <property type="match status" value="1"/>
</dbReference>
<proteinExistence type="inferred from homology"/>